<proteinExistence type="evidence at protein level"/>
<name>FORF_DICDI</name>
<feature type="chain" id="PRO_0000363918" description="Formin-F">
    <location>
        <begin position="1"/>
        <end position="1220"/>
    </location>
</feature>
<feature type="domain" description="GBD/FH3" evidence="3">
    <location>
        <begin position="6"/>
        <end position="373"/>
    </location>
</feature>
<feature type="domain" description="FH1">
    <location>
        <begin position="532"/>
        <end position="655"/>
    </location>
</feature>
<feature type="domain" description="FH2" evidence="4">
    <location>
        <begin position="656"/>
        <end position="1054"/>
    </location>
</feature>
<feature type="domain" description="DAD">
    <location>
        <begin position="1083"/>
        <end position="1158"/>
    </location>
</feature>
<feature type="region of interest" description="Disordered" evidence="5">
    <location>
        <begin position="1"/>
        <end position="62"/>
    </location>
</feature>
<feature type="region of interest" description="Disordered" evidence="5">
    <location>
        <begin position="461"/>
        <end position="659"/>
    </location>
</feature>
<feature type="region of interest" description="Disordered" evidence="5">
    <location>
        <begin position="711"/>
        <end position="732"/>
    </location>
</feature>
<feature type="region of interest" description="Disordered" evidence="5">
    <location>
        <begin position="1049"/>
        <end position="1192"/>
    </location>
</feature>
<feature type="coiled-coil region" evidence="2">
    <location>
        <begin position="392"/>
        <end position="428"/>
    </location>
</feature>
<feature type="coiled-coil region" evidence="2">
    <location>
        <begin position="1032"/>
        <end position="1062"/>
    </location>
</feature>
<feature type="compositionally biased region" description="Basic residues" evidence="5">
    <location>
        <begin position="1"/>
        <end position="10"/>
    </location>
</feature>
<feature type="compositionally biased region" description="Basic and acidic residues" evidence="5">
    <location>
        <begin position="11"/>
        <end position="20"/>
    </location>
</feature>
<feature type="compositionally biased region" description="Polar residues" evidence="5">
    <location>
        <begin position="41"/>
        <end position="56"/>
    </location>
</feature>
<feature type="compositionally biased region" description="Low complexity" evidence="5">
    <location>
        <begin position="501"/>
        <end position="518"/>
    </location>
</feature>
<feature type="compositionally biased region" description="Low complexity" evidence="5">
    <location>
        <begin position="525"/>
        <end position="554"/>
    </location>
</feature>
<feature type="compositionally biased region" description="Polar residues" evidence="5">
    <location>
        <begin position="555"/>
        <end position="564"/>
    </location>
</feature>
<feature type="compositionally biased region" description="Pro residues" evidence="5">
    <location>
        <begin position="575"/>
        <end position="638"/>
    </location>
</feature>
<feature type="compositionally biased region" description="Basic and acidic residues" evidence="5">
    <location>
        <begin position="711"/>
        <end position="722"/>
    </location>
</feature>
<feature type="compositionally biased region" description="Polar residues" evidence="5">
    <location>
        <begin position="1066"/>
        <end position="1083"/>
    </location>
</feature>
<feature type="compositionally biased region" description="Low complexity" evidence="5">
    <location>
        <begin position="1117"/>
        <end position="1142"/>
    </location>
</feature>
<feature type="compositionally biased region" description="Basic and acidic residues" evidence="5">
    <location>
        <begin position="1161"/>
        <end position="1192"/>
    </location>
</feature>
<evidence type="ECO:0000250" key="1"/>
<evidence type="ECO:0000255" key="2"/>
<evidence type="ECO:0000255" key="3">
    <source>
        <dbReference type="PROSITE-ProRule" id="PRU00579"/>
    </source>
</evidence>
<evidence type="ECO:0000255" key="4">
    <source>
        <dbReference type="PROSITE-ProRule" id="PRU00774"/>
    </source>
</evidence>
<evidence type="ECO:0000256" key="5">
    <source>
        <dbReference type="SAM" id="MobiDB-lite"/>
    </source>
</evidence>
<evidence type="ECO:0000269" key="6">
    <source>
    </source>
</evidence>
<evidence type="ECO:0000269" key="7">
    <source>
    </source>
</evidence>
<evidence type="ECO:0000305" key="8"/>
<comment type="function">
    <text evidence="1">Formins play an important role in the nucleation of actin and the formation of linear actin filaments.</text>
</comment>
<comment type="subunit">
    <text evidence="7">Interacts (via GBD/FH3 domain) with activated Rho-GTPases.</text>
</comment>
<comment type="developmental stage">
    <text evidence="6">Expression gradually increased after the onset of development.</text>
</comment>
<comment type="domain">
    <text evidence="1">The DAD domain regulates activation via by an autoinhibitory interaction with the GBD/FH3 domain. This autoinhibition is released upon competitive binding of an activated GTPase. The release of DAD allows the FH2 domain to then nucleate and elongate nonbranched actin filaments (By similarity).</text>
</comment>
<comment type="similarity">
    <text evidence="8">Belongs to the formin homology family. Diaphanous subfamily.</text>
</comment>
<keyword id="KW-0009">Actin-binding</keyword>
<keyword id="KW-0175">Coiled coil</keyword>
<keyword id="KW-1185">Reference proteome</keyword>
<organism>
    <name type="scientific">Dictyostelium discoideum</name>
    <name type="common">Social amoeba</name>
    <dbReference type="NCBI Taxonomy" id="44689"/>
    <lineage>
        <taxon>Eukaryota</taxon>
        <taxon>Amoebozoa</taxon>
        <taxon>Evosea</taxon>
        <taxon>Eumycetozoa</taxon>
        <taxon>Dictyostelia</taxon>
        <taxon>Dictyosteliales</taxon>
        <taxon>Dictyosteliaceae</taxon>
        <taxon>Dictyostelium</taxon>
    </lineage>
</organism>
<dbReference type="EMBL" id="AJ812237">
    <property type="protein sequence ID" value="CAH23234.1"/>
    <property type="molecule type" value="mRNA"/>
</dbReference>
<dbReference type="EMBL" id="AAFI02000148">
    <property type="protein sequence ID" value="EAL62593.1"/>
    <property type="molecule type" value="Genomic_DNA"/>
</dbReference>
<dbReference type="RefSeq" id="XP_636106.1">
    <property type="nucleotide sequence ID" value="XM_631014.1"/>
</dbReference>
<dbReference type="SMR" id="Q5TJ56"/>
<dbReference type="FunCoup" id="Q5TJ56">
    <property type="interactions" value="1"/>
</dbReference>
<dbReference type="STRING" id="44689.Q5TJ56"/>
<dbReference type="PaxDb" id="44689-DDB0231185"/>
<dbReference type="EnsemblProtists" id="EAL62593">
    <property type="protein sequence ID" value="EAL62593"/>
    <property type="gene ID" value="DDB_G0289763"/>
</dbReference>
<dbReference type="GeneID" id="8627319"/>
<dbReference type="KEGG" id="ddi:DDB_G0289763"/>
<dbReference type="dictyBase" id="DDB_G0289763">
    <property type="gene designation" value="forF"/>
</dbReference>
<dbReference type="VEuPathDB" id="AmoebaDB:DDB_G0289763"/>
<dbReference type="eggNOG" id="KOG1924">
    <property type="taxonomic scope" value="Eukaryota"/>
</dbReference>
<dbReference type="HOGENOM" id="CLU_279717_0_0_1"/>
<dbReference type="InParanoid" id="Q5TJ56"/>
<dbReference type="OMA" id="TPSIKMK"/>
<dbReference type="PhylomeDB" id="Q5TJ56"/>
<dbReference type="PRO" id="PR:Q5TJ56"/>
<dbReference type="Proteomes" id="UP000002195">
    <property type="component" value="Chromosome 5"/>
</dbReference>
<dbReference type="GO" id="GO:0015629">
    <property type="term" value="C:actin cytoskeleton"/>
    <property type="evidence" value="ECO:0000314"/>
    <property type="project" value="dictyBase"/>
</dbReference>
<dbReference type="GO" id="GO:0031143">
    <property type="term" value="C:pseudopodium"/>
    <property type="evidence" value="ECO:0000314"/>
    <property type="project" value="dictyBase"/>
</dbReference>
<dbReference type="GO" id="GO:0051015">
    <property type="term" value="F:actin filament binding"/>
    <property type="evidence" value="ECO:0000318"/>
    <property type="project" value="GO_Central"/>
</dbReference>
<dbReference type="GO" id="GO:0005522">
    <property type="term" value="F:profilin binding"/>
    <property type="evidence" value="ECO:0000353"/>
    <property type="project" value="dictyBase"/>
</dbReference>
<dbReference type="GO" id="GO:0031267">
    <property type="term" value="F:small GTPase binding"/>
    <property type="evidence" value="ECO:0007669"/>
    <property type="project" value="InterPro"/>
</dbReference>
<dbReference type="GO" id="GO:0070060">
    <property type="term" value="P:'de novo' actin filament nucleation"/>
    <property type="evidence" value="ECO:0000314"/>
    <property type="project" value="dictyBase"/>
</dbReference>
<dbReference type="GO" id="GO:0030041">
    <property type="term" value="P:actin filament polymerization"/>
    <property type="evidence" value="ECO:0000314"/>
    <property type="project" value="dictyBase"/>
</dbReference>
<dbReference type="GO" id="GO:0046956">
    <property type="term" value="P:positive phototaxis"/>
    <property type="evidence" value="ECO:0000315"/>
    <property type="project" value="dictyBase"/>
</dbReference>
<dbReference type="FunFam" id="1.20.58.2220:FF:000025">
    <property type="entry name" value="Formin-E"/>
    <property type="match status" value="1"/>
</dbReference>
<dbReference type="Gene3D" id="1.20.58.2220">
    <property type="entry name" value="Formin, FH2 domain"/>
    <property type="match status" value="1"/>
</dbReference>
<dbReference type="Gene3D" id="1.10.238.150">
    <property type="entry name" value="Formin, FH3 diaphanous domain"/>
    <property type="match status" value="1"/>
</dbReference>
<dbReference type="Gene3D" id="1.25.10.10">
    <property type="entry name" value="Leucine-rich Repeat Variant"/>
    <property type="match status" value="1"/>
</dbReference>
<dbReference type="InterPro" id="IPR011989">
    <property type="entry name" value="ARM-like"/>
</dbReference>
<dbReference type="InterPro" id="IPR016024">
    <property type="entry name" value="ARM-type_fold"/>
</dbReference>
<dbReference type="InterPro" id="IPR015425">
    <property type="entry name" value="FH2_Formin"/>
</dbReference>
<dbReference type="InterPro" id="IPR042201">
    <property type="entry name" value="FH2_Formin_sf"/>
</dbReference>
<dbReference type="InterPro" id="IPR010472">
    <property type="entry name" value="FH3_dom"/>
</dbReference>
<dbReference type="InterPro" id="IPR051425">
    <property type="entry name" value="Formin_Homology"/>
</dbReference>
<dbReference type="InterPro" id="IPR014768">
    <property type="entry name" value="GBD/FH3_dom"/>
</dbReference>
<dbReference type="InterPro" id="IPR010473">
    <property type="entry name" value="GTPase-bd"/>
</dbReference>
<dbReference type="PANTHER" id="PTHR45725">
    <property type="entry name" value="FORMIN HOMOLOGY 2 FAMILY MEMBER"/>
    <property type="match status" value="1"/>
</dbReference>
<dbReference type="PANTHER" id="PTHR45725:SF19">
    <property type="entry name" value="FORMIN-A-RELATED"/>
    <property type="match status" value="1"/>
</dbReference>
<dbReference type="Pfam" id="PF06367">
    <property type="entry name" value="Drf_FH3"/>
    <property type="match status" value="1"/>
</dbReference>
<dbReference type="Pfam" id="PF06371">
    <property type="entry name" value="Drf_GBD"/>
    <property type="match status" value="1"/>
</dbReference>
<dbReference type="Pfam" id="PF02181">
    <property type="entry name" value="FH2"/>
    <property type="match status" value="1"/>
</dbReference>
<dbReference type="SMART" id="SM01139">
    <property type="entry name" value="Drf_FH3"/>
    <property type="match status" value="1"/>
</dbReference>
<dbReference type="SMART" id="SM01140">
    <property type="entry name" value="Drf_GBD"/>
    <property type="match status" value="1"/>
</dbReference>
<dbReference type="SMART" id="SM00498">
    <property type="entry name" value="FH2"/>
    <property type="match status" value="1"/>
</dbReference>
<dbReference type="SUPFAM" id="SSF48371">
    <property type="entry name" value="ARM repeat"/>
    <property type="match status" value="1"/>
</dbReference>
<dbReference type="SUPFAM" id="SSF101447">
    <property type="entry name" value="Formin homology 2 domain (FH2 domain)"/>
    <property type="match status" value="1"/>
</dbReference>
<dbReference type="PROSITE" id="PS51444">
    <property type="entry name" value="FH2"/>
    <property type="match status" value="1"/>
</dbReference>
<dbReference type="PROSITE" id="PS51232">
    <property type="entry name" value="GBD_FH3"/>
    <property type="match status" value="1"/>
</dbReference>
<accession>Q5TJ56</accession>
<accession>Q54H12</accession>
<reference key="1">
    <citation type="journal article" date="2004" name="Nucleic Acids Res.">
        <title>A rapid and efficient method to generate multiple gene disruptions in Dictyostelium discoideum using a single selectable marker and the Cre-loxP system.</title>
        <authorList>
            <person name="Faix J."/>
            <person name="Kreppel L."/>
            <person name="Shaulsky G."/>
            <person name="Schleicher M."/>
            <person name="Kimmel A.R."/>
        </authorList>
    </citation>
    <scope>NUCLEOTIDE SEQUENCE [MRNA]</scope>
    <source>
        <strain>AX2</strain>
    </source>
</reference>
<reference key="2">
    <citation type="journal article" date="2005" name="Nature">
        <title>The genome of the social amoeba Dictyostelium discoideum.</title>
        <authorList>
            <person name="Eichinger L."/>
            <person name="Pachebat J.A."/>
            <person name="Gloeckner G."/>
            <person name="Rajandream M.A."/>
            <person name="Sucgang R."/>
            <person name="Berriman M."/>
            <person name="Song J."/>
            <person name="Olsen R."/>
            <person name="Szafranski K."/>
            <person name="Xu Q."/>
            <person name="Tunggal B."/>
            <person name="Kummerfeld S."/>
            <person name="Madera M."/>
            <person name="Konfortov B.A."/>
            <person name="Rivero F."/>
            <person name="Bankier A.T."/>
            <person name="Lehmann R."/>
            <person name="Hamlin N."/>
            <person name="Davies R."/>
            <person name="Gaudet P."/>
            <person name="Fey P."/>
            <person name="Pilcher K."/>
            <person name="Chen G."/>
            <person name="Saunders D."/>
            <person name="Sodergren E.J."/>
            <person name="Davis P."/>
            <person name="Kerhornou A."/>
            <person name="Nie X."/>
            <person name="Hall N."/>
            <person name="Anjard C."/>
            <person name="Hemphill L."/>
            <person name="Bason N."/>
            <person name="Farbrother P."/>
            <person name="Desany B."/>
            <person name="Just E."/>
            <person name="Morio T."/>
            <person name="Rost R."/>
            <person name="Churcher C.M."/>
            <person name="Cooper J."/>
            <person name="Haydock S."/>
            <person name="van Driessche N."/>
            <person name="Cronin A."/>
            <person name="Goodhead I."/>
            <person name="Muzny D.M."/>
            <person name="Mourier T."/>
            <person name="Pain A."/>
            <person name="Lu M."/>
            <person name="Harper D."/>
            <person name="Lindsay R."/>
            <person name="Hauser H."/>
            <person name="James K.D."/>
            <person name="Quiles M."/>
            <person name="Madan Babu M."/>
            <person name="Saito T."/>
            <person name="Buchrieser C."/>
            <person name="Wardroper A."/>
            <person name="Felder M."/>
            <person name="Thangavelu M."/>
            <person name="Johnson D."/>
            <person name="Knights A."/>
            <person name="Loulseged H."/>
            <person name="Mungall K.L."/>
            <person name="Oliver K."/>
            <person name="Price C."/>
            <person name="Quail M.A."/>
            <person name="Urushihara H."/>
            <person name="Hernandez J."/>
            <person name="Rabbinowitsch E."/>
            <person name="Steffen D."/>
            <person name="Sanders M."/>
            <person name="Ma J."/>
            <person name="Kohara Y."/>
            <person name="Sharp S."/>
            <person name="Simmonds M.N."/>
            <person name="Spiegler S."/>
            <person name="Tivey A."/>
            <person name="Sugano S."/>
            <person name="White B."/>
            <person name="Walker D."/>
            <person name="Woodward J.R."/>
            <person name="Winckler T."/>
            <person name="Tanaka Y."/>
            <person name="Shaulsky G."/>
            <person name="Schleicher M."/>
            <person name="Weinstock G.M."/>
            <person name="Rosenthal A."/>
            <person name="Cox E.C."/>
            <person name="Chisholm R.L."/>
            <person name="Gibbs R.A."/>
            <person name="Loomis W.F."/>
            <person name="Platzer M."/>
            <person name="Kay R.R."/>
            <person name="Williams J.G."/>
            <person name="Dear P.H."/>
            <person name="Noegel A.A."/>
            <person name="Barrell B.G."/>
            <person name="Kuspa A."/>
        </authorList>
    </citation>
    <scope>NUCLEOTIDE SEQUENCE [LARGE SCALE GENOMIC DNA]</scope>
    <source>
        <strain>AX4</strain>
    </source>
</reference>
<reference key="3">
    <citation type="journal article" date="2004" name="Protoplasma">
        <title>Evolutionarily conserved modules in actin nucleation: lessons from Dictyostelium discoideum and plants. Review article.</title>
        <authorList>
            <person name="Cvrckova F."/>
            <person name="Rivero F."/>
            <person name="Bavlnka B."/>
        </authorList>
    </citation>
    <scope>NOMENCLATURE</scope>
</reference>
<reference key="4">
    <citation type="journal article" date="2005" name="BMC Genomics">
        <title>A comparative sequence analysis reveals a common GBD/FH3-FH1-FH2-DAD architecture in formins from Dictyostelium, fungi and metazoa.</title>
        <authorList>
            <person name="Rivero F."/>
            <person name="Muramoto T."/>
            <person name="Meyer A.-K."/>
            <person name="Urushihara H."/>
            <person name="Uyeda T.Q.P."/>
            <person name="Kitayama C."/>
        </authorList>
    </citation>
    <scope>DEVELOPMENTAL STAGE</scope>
</reference>
<reference key="5">
    <citation type="journal article" date="2006" name="Eur. J. Cell Biol.">
        <title>Rho GTPase signaling in Dictyostelium discoideum: insights from the genome.</title>
        <authorList>
            <person name="Vlahou G."/>
            <person name="Rivero F."/>
        </authorList>
    </citation>
    <scope>INTERACTION WITH RHO GTPASE</scope>
</reference>
<protein>
    <recommendedName>
        <fullName>Formin-F</fullName>
    </recommendedName>
    <alternativeName>
        <fullName>Diaphanous-related formin dia1</fullName>
    </alternativeName>
</protein>
<gene>
    <name type="primary">forF</name>
    <name type="synonym">drf1</name>
    <name type="ORF">DDB_G0289763</name>
</gene>
<sequence>MNRIFGRKKKDKDSDEKGSTESENDFLSSLPAKANKRYSMAYSSLQPDGNNSTNSKSADKFDDKGKAVDTPEFFVNTINLLPNIEILAQLCSSLQSKPSAWSKSLIDCNGIEALLNVLAFIERNGQKDSDVILQSLAVTCLLSLLNSKYGIEKAIATPNSMIRLITSMDTPKADTRSSVFEILTAICMISEKGYQLILEAMTHFKQVRKERFRFTFLVESMKKVMNSSDKEYLTTCLTLVNGIVNSSEEIDERIQLRTEFTRLGLDEVISVNKNIPYEEAPDLLTQIDVYEDEQRADQEELSERFEDLDIDINDPQVIFNEIYKQAKDRLHHPLLAILQSLLSISSDTEVGMLSWFLIEKLVLQISVNKPMIGDDDGKVSLEDLLASTAPSVALQSEFQKNIEELAKVKDQLKKANFDLNIANQELSSRSHESSVLKSNMFNTVKQKDQEIIKLRGQMKRIDSNFFSPPGGDGDDHINVINTPEESSPHHESPRKQQQQTSKPPLNPKSSKPPISSSQLKEKSKSNLSSSSSDSLSNDFKSQVEVAQQQQPQQQNIESTLTPEPTQIIKEEPIVTTPPPAPPAPPPPPMMGGGPPPPPPPPMMGGGGPPPPPPPPMMGGGPPPPPPMGGKGGPPPPPGGGGFGLFNSNKPPANAPKFTVSKPTTKVKQFQWTKIPNKKLGETIFTNLGTIKTDWLNVGEIENLFFAPEANSQKKLEASDKKSTSSTKPGTVSVIDPKKSQNLAIYLSKFKCPLEEIKTALYTLDEDIFTMESLKALEQYLPTDEDMEAIKDYLKKDGELKMLTKAEHFLLEMDSVSSLAERVKSFYLKILFPDKLKEIKPDLELFTKTIKDIKNSKNFLKVMEVVLIIGNFLNGGTARGDCFGFKLDALLKLADTKTANNKSNLLVYIISELEQKFPDSLKFMDDLSGVQECVKISMNTISADLNLLKKDLDAVNNGIGKMKRSKEESYFFSTMDDFIKDANIEIKIAFDQFQEAEKNFQELAVLFGEESKIPSEEFFVTINRFIVMFDKCYKDFQRDKEAAERAIKRDEAKAKKAQQLKRMNGKIASSTNNKNPLASSSTSVGDGGMVEDIMQSVRDGDAFKQRRRLKGTKENTDDSSSITTISEQSENSNTSSITITTPSGIELDITPSKSGSRREKKTSKSSDKDKEKEKEKEKQCESTESEDINKKDINVAAKALTIVMRSKQTMHSRIDTFNFDA</sequence>